<comment type="function">
    <text evidence="1">Catalyzes the conversion of inosine 5'-phosphate (IMP) to xanthosine 5'-phosphate (XMP), the first committed and rate-limiting step in the de novo synthesis of guanine nucleotides, and therefore plays an important role in the regulation of cell growth.</text>
</comment>
<comment type="catalytic activity">
    <reaction evidence="1">
        <text>IMP + NAD(+) + H2O = XMP + NADH + H(+)</text>
        <dbReference type="Rhea" id="RHEA:11708"/>
        <dbReference type="ChEBI" id="CHEBI:15377"/>
        <dbReference type="ChEBI" id="CHEBI:15378"/>
        <dbReference type="ChEBI" id="CHEBI:57464"/>
        <dbReference type="ChEBI" id="CHEBI:57540"/>
        <dbReference type="ChEBI" id="CHEBI:57945"/>
        <dbReference type="ChEBI" id="CHEBI:58053"/>
        <dbReference type="EC" id="1.1.1.205"/>
    </reaction>
</comment>
<comment type="cofactor">
    <cofactor evidence="1">
        <name>K(+)</name>
        <dbReference type="ChEBI" id="CHEBI:29103"/>
    </cofactor>
</comment>
<comment type="activity regulation">
    <text evidence="1">Mycophenolic acid (MPA) is a non-competitive inhibitor that prevents formation of the closed enzyme conformation by binding to the same site as the amobile flap. In contrast, mizoribine monophosphate (MZP) is a competitive inhibitor that induces the closed conformation. MPA is a potent inhibitor of mammalian IMPDHs but a poor inhibitor of the bacterial enzymes. MZP is a more potent inhibitor of bacterial IMPDH.</text>
</comment>
<comment type="pathway">
    <text evidence="1">Purine metabolism; XMP biosynthesis via de novo pathway; XMP from IMP: step 1/1.</text>
</comment>
<comment type="subunit">
    <text evidence="1">Homotetramer.</text>
</comment>
<comment type="similarity">
    <text evidence="1">Belongs to the IMPDH/GMPR family.</text>
</comment>
<dbReference type="EC" id="1.1.1.205" evidence="1"/>
<dbReference type="EMBL" id="AE014295">
    <property type="protein sequence ID" value="AAN25506.1"/>
    <property type="molecule type" value="Genomic_DNA"/>
</dbReference>
<dbReference type="RefSeq" id="NP_696870.1">
    <property type="nucleotide sequence ID" value="NC_004307.2"/>
</dbReference>
<dbReference type="SMR" id="Q8G3N6"/>
<dbReference type="STRING" id="206672.BL1722"/>
<dbReference type="EnsemblBacteria" id="AAN25506">
    <property type="protein sequence ID" value="AAN25506"/>
    <property type="gene ID" value="BL1722"/>
</dbReference>
<dbReference type="KEGG" id="blo:BL1722"/>
<dbReference type="PATRIC" id="fig|206672.9.peg.1776"/>
<dbReference type="HOGENOM" id="CLU_022552_2_1_11"/>
<dbReference type="OrthoDB" id="9805398at2"/>
<dbReference type="PhylomeDB" id="Q8G3N6"/>
<dbReference type="UniPathway" id="UPA00601">
    <property type="reaction ID" value="UER00295"/>
</dbReference>
<dbReference type="Proteomes" id="UP000000439">
    <property type="component" value="Chromosome"/>
</dbReference>
<dbReference type="GO" id="GO:0003938">
    <property type="term" value="F:IMP dehydrogenase activity"/>
    <property type="evidence" value="ECO:0007669"/>
    <property type="project" value="UniProtKB-UniRule"/>
</dbReference>
<dbReference type="GO" id="GO:0046872">
    <property type="term" value="F:metal ion binding"/>
    <property type="evidence" value="ECO:0007669"/>
    <property type="project" value="UniProtKB-UniRule"/>
</dbReference>
<dbReference type="GO" id="GO:0000166">
    <property type="term" value="F:nucleotide binding"/>
    <property type="evidence" value="ECO:0007669"/>
    <property type="project" value="UniProtKB-UniRule"/>
</dbReference>
<dbReference type="GO" id="GO:0006177">
    <property type="term" value="P:GMP biosynthetic process"/>
    <property type="evidence" value="ECO:0007669"/>
    <property type="project" value="UniProtKB-UniRule"/>
</dbReference>
<dbReference type="GO" id="GO:0006183">
    <property type="term" value="P:GTP biosynthetic process"/>
    <property type="evidence" value="ECO:0007669"/>
    <property type="project" value="TreeGrafter"/>
</dbReference>
<dbReference type="CDD" id="cd04601">
    <property type="entry name" value="CBS_pair_IMPDH"/>
    <property type="match status" value="1"/>
</dbReference>
<dbReference type="CDD" id="cd00381">
    <property type="entry name" value="IMPDH"/>
    <property type="match status" value="1"/>
</dbReference>
<dbReference type="FunFam" id="3.20.20.70:FF:000003">
    <property type="entry name" value="GMP reductase"/>
    <property type="match status" value="1"/>
</dbReference>
<dbReference type="Gene3D" id="3.20.20.70">
    <property type="entry name" value="Aldolase class I"/>
    <property type="match status" value="1"/>
</dbReference>
<dbReference type="HAMAP" id="MF_01964">
    <property type="entry name" value="IMPDH"/>
    <property type="match status" value="1"/>
</dbReference>
<dbReference type="InterPro" id="IPR013785">
    <property type="entry name" value="Aldolase_TIM"/>
</dbReference>
<dbReference type="InterPro" id="IPR000644">
    <property type="entry name" value="CBS_dom"/>
</dbReference>
<dbReference type="InterPro" id="IPR046342">
    <property type="entry name" value="CBS_dom_sf"/>
</dbReference>
<dbReference type="InterPro" id="IPR005990">
    <property type="entry name" value="IMP_DH"/>
</dbReference>
<dbReference type="InterPro" id="IPR015875">
    <property type="entry name" value="IMP_DH/GMP_Rdtase_CS"/>
</dbReference>
<dbReference type="InterPro" id="IPR001093">
    <property type="entry name" value="IMP_DH_GMPRt"/>
</dbReference>
<dbReference type="NCBIfam" id="TIGR01302">
    <property type="entry name" value="IMP_dehydrog"/>
    <property type="match status" value="1"/>
</dbReference>
<dbReference type="PANTHER" id="PTHR11911:SF111">
    <property type="entry name" value="INOSINE-5'-MONOPHOSPHATE DEHYDROGENASE"/>
    <property type="match status" value="1"/>
</dbReference>
<dbReference type="PANTHER" id="PTHR11911">
    <property type="entry name" value="INOSINE-5-MONOPHOSPHATE DEHYDROGENASE RELATED"/>
    <property type="match status" value="1"/>
</dbReference>
<dbReference type="Pfam" id="PF00571">
    <property type="entry name" value="CBS"/>
    <property type="match status" value="2"/>
</dbReference>
<dbReference type="Pfam" id="PF00478">
    <property type="entry name" value="IMPDH"/>
    <property type="match status" value="1"/>
</dbReference>
<dbReference type="PIRSF" id="PIRSF000130">
    <property type="entry name" value="IMPDH"/>
    <property type="match status" value="1"/>
</dbReference>
<dbReference type="SMART" id="SM00116">
    <property type="entry name" value="CBS"/>
    <property type="match status" value="2"/>
</dbReference>
<dbReference type="SMART" id="SM01240">
    <property type="entry name" value="IMPDH"/>
    <property type="match status" value="1"/>
</dbReference>
<dbReference type="SUPFAM" id="SSF54631">
    <property type="entry name" value="CBS-domain pair"/>
    <property type="match status" value="1"/>
</dbReference>
<dbReference type="SUPFAM" id="SSF51412">
    <property type="entry name" value="Inosine monophosphate dehydrogenase (IMPDH)"/>
    <property type="match status" value="1"/>
</dbReference>
<dbReference type="PROSITE" id="PS51371">
    <property type="entry name" value="CBS"/>
    <property type="match status" value="2"/>
</dbReference>
<dbReference type="PROSITE" id="PS00487">
    <property type="entry name" value="IMP_DH_GMP_RED"/>
    <property type="match status" value="1"/>
</dbReference>
<feature type="chain" id="PRO_0000415688" description="Inosine-5'-monophosphate dehydrogenase">
    <location>
        <begin position="1"/>
        <end position="545"/>
    </location>
</feature>
<feature type="domain" description="CBS 1" evidence="1">
    <location>
        <begin position="138"/>
        <end position="194"/>
    </location>
</feature>
<feature type="domain" description="CBS 2" evidence="1">
    <location>
        <begin position="201"/>
        <end position="258"/>
    </location>
</feature>
<feature type="active site" description="Thioimidate intermediate" evidence="1">
    <location>
        <position position="354"/>
    </location>
</feature>
<feature type="active site" description="Proton acceptor" evidence="1">
    <location>
        <position position="455"/>
    </location>
</feature>
<feature type="binding site" evidence="1">
    <location>
        <position position="295"/>
    </location>
    <ligand>
        <name>NAD(+)</name>
        <dbReference type="ChEBI" id="CHEBI:57540"/>
    </ligand>
</feature>
<feature type="binding site" evidence="1">
    <location>
        <begin position="347"/>
        <end position="349"/>
    </location>
    <ligand>
        <name>NAD(+)</name>
        <dbReference type="ChEBI" id="CHEBI:57540"/>
    </ligand>
</feature>
<feature type="binding site" description="in other chain" evidence="1">
    <location>
        <position position="349"/>
    </location>
    <ligand>
        <name>K(+)</name>
        <dbReference type="ChEBI" id="CHEBI:29103"/>
        <note>ligand shared between two tetrameric partners</note>
    </ligand>
</feature>
<feature type="binding site" description="in other chain" evidence="1">
    <location>
        <position position="351"/>
    </location>
    <ligand>
        <name>K(+)</name>
        <dbReference type="ChEBI" id="CHEBI:29103"/>
        <note>ligand shared between two tetrameric partners</note>
    </ligand>
</feature>
<feature type="binding site" evidence="1">
    <location>
        <position position="352"/>
    </location>
    <ligand>
        <name>IMP</name>
        <dbReference type="ChEBI" id="CHEBI:58053"/>
    </ligand>
</feature>
<feature type="binding site" description="in other chain" evidence="1">
    <location>
        <position position="354"/>
    </location>
    <ligand>
        <name>K(+)</name>
        <dbReference type="ChEBI" id="CHEBI:29103"/>
        <note>ligand shared between two tetrameric partners</note>
    </ligand>
</feature>
<feature type="binding site" evidence="1">
    <location>
        <begin position="387"/>
        <end position="389"/>
    </location>
    <ligand>
        <name>IMP</name>
        <dbReference type="ChEBI" id="CHEBI:58053"/>
    </ligand>
</feature>
<feature type="binding site" evidence="1">
    <location>
        <begin position="410"/>
        <end position="411"/>
    </location>
    <ligand>
        <name>IMP</name>
        <dbReference type="ChEBI" id="CHEBI:58053"/>
    </ligand>
</feature>
<feature type="binding site" evidence="1">
    <location>
        <begin position="434"/>
        <end position="438"/>
    </location>
    <ligand>
        <name>IMP</name>
        <dbReference type="ChEBI" id="CHEBI:58053"/>
    </ligand>
</feature>
<feature type="binding site" evidence="1">
    <location>
        <position position="470"/>
    </location>
    <ligand>
        <name>IMP</name>
        <dbReference type="ChEBI" id="CHEBI:58053"/>
    </ligand>
</feature>
<feature type="binding site" evidence="1">
    <location>
        <position position="524"/>
    </location>
    <ligand>
        <name>K(+)</name>
        <dbReference type="ChEBI" id="CHEBI:29103"/>
        <note>ligand shared between two tetrameric partners</note>
    </ligand>
</feature>
<feature type="binding site" evidence="1">
    <location>
        <position position="525"/>
    </location>
    <ligand>
        <name>K(+)</name>
        <dbReference type="ChEBI" id="CHEBI:29103"/>
        <note>ligand shared between two tetrameric partners</note>
    </ligand>
</feature>
<feature type="binding site" evidence="1">
    <location>
        <position position="526"/>
    </location>
    <ligand>
        <name>K(+)</name>
        <dbReference type="ChEBI" id="CHEBI:29103"/>
        <note>ligand shared between two tetrameric partners</note>
    </ligand>
</feature>
<evidence type="ECO:0000255" key="1">
    <source>
        <dbReference type="HAMAP-Rule" id="MF_01964"/>
    </source>
</evidence>
<organism>
    <name type="scientific">Bifidobacterium longum (strain NCC 2705)</name>
    <dbReference type="NCBI Taxonomy" id="206672"/>
    <lineage>
        <taxon>Bacteria</taxon>
        <taxon>Bacillati</taxon>
        <taxon>Actinomycetota</taxon>
        <taxon>Actinomycetes</taxon>
        <taxon>Bifidobacteriales</taxon>
        <taxon>Bifidobacteriaceae</taxon>
        <taxon>Bifidobacterium</taxon>
    </lineage>
</organism>
<name>IMDH_BIFLO</name>
<reference key="1">
    <citation type="journal article" date="2002" name="Proc. Natl. Acad. Sci. U.S.A.">
        <title>The genome sequence of Bifidobacterium longum reflects its adaptation to the human gastrointestinal tract.</title>
        <authorList>
            <person name="Schell M.A."/>
            <person name="Karmirantzou M."/>
            <person name="Snel B."/>
            <person name="Vilanova D."/>
            <person name="Berger B."/>
            <person name="Pessi G."/>
            <person name="Zwahlen M.-C."/>
            <person name="Desiere F."/>
            <person name="Bork P."/>
            <person name="Delley M."/>
            <person name="Pridmore R.D."/>
            <person name="Arigoni F."/>
        </authorList>
    </citation>
    <scope>NUCLEOTIDE SEQUENCE [LARGE SCALE GENOMIC DNA]</scope>
    <source>
        <strain>NCC 2705</strain>
    </source>
</reference>
<gene>
    <name evidence="1" type="primary">guaB</name>
    <name type="ordered locus">BL1722</name>
</gene>
<accession>Q8G3N6</accession>
<keyword id="KW-0129">CBS domain</keyword>
<keyword id="KW-0332">GMP biosynthesis</keyword>
<keyword id="KW-0479">Metal-binding</keyword>
<keyword id="KW-0520">NAD</keyword>
<keyword id="KW-0560">Oxidoreductase</keyword>
<keyword id="KW-0630">Potassium</keyword>
<keyword id="KW-0658">Purine biosynthesis</keyword>
<keyword id="KW-1185">Reference proteome</keyword>
<keyword id="KW-0677">Repeat</keyword>
<proteinExistence type="inferred from homology"/>
<protein>
    <recommendedName>
        <fullName evidence="1">Inosine-5'-monophosphate dehydrogenase</fullName>
        <shortName evidence="1">IMP dehydrogenase</shortName>
        <shortName evidence="1">IMPD</shortName>
        <shortName evidence="1">IMPDH</shortName>
        <ecNumber evidence="1">1.1.1.205</ecNumber>
    </recommendedName>
</protein>
<sequence>MRCRTRQRISERSQACVVKVSACSYSVCMATNLDELNAQSAYAPLPPIFAKLGLAYDDVLLLPNETDVIPSEVDTSTHLTRKIVMKAPVLSAAMDTVTESEMAIAMARNGGIGVLHRNLSIDDQAAQVDVVKRSESGMITDPLTVNPEVTLADLDKLCGKFHISGLPVVDKENKLVGIITNRDMRFIASEDYDTLKVKDVMTKENLVTGPSNISKDDAHRLLAQHKVEKLPLVDEEGHLTGLITVKDFVKTEQYPDATKDEQGRLRVAAGVGFLGDAWQRASALMEAGVDVLVVDTANGEARLALDMISRLKHDSAFDGVQIIGGNVGTRSGAQAMIEAGADAVKVGIGPGSICTTRIVAGVGVPQLTAVYEAAQACRAAGVPCIADGGIHYSGDIAKALVAGASSVMLGGTLAGCEEAPGEKVLLHGKQYKLYRGMGSLGAMAPRGKKSYSKDRYFQADVTSSDKVVPEGVEGEVPYRGPLNAVLYQMLGGLHQSMFYIGAHNIAEMPERGKFIRITDAGLRESHPHDIVMTTEAPNYSGFHNN</sequence>